<proteinExistence type="evidence at protein level"/>
<organism>
    <name type="scientific">Mus musculus</name>
    <name type="common">Mouse</name>
    <dbReference type="NCBI Taxonomy" id="10090"/>
    <lineage>
        <taxon>Eukaryota</taxon>
        <taxon>Metazoa</taxon>
        <taxon>Chordata</taxon>
        <taxon>Craniata</taxon>
        <taxon>Vertebrata</taxon>
        <taxon>Euteleostomi</taxon>
        <taxon>Mammalia</taxon>
        <taxon>Eutheria</taxon>
        <taxon>Euarchontoglires</taxon>
        <taxon>Glires</taxon>
        <taxon>Rodentia</taxon>
        <taxon>Myomorpha</taxon>
        <taxon>Muroidea</taxon>
        <taxon>Muridae</taxon>
        <taxon>Murinae</taxon>
        <taxon>Mus</taxon>
        <taxon>Mus</taxon>
    </lineage>
</organism>
<evidence type="ECO:0000250" key="1">
    <source>
        <dbReference type="UniProtKB" id="A4Q9E8"/>
    </source>
</evidence>
<evidence type="ECO:0000250" key="2">
    <source>
        <dbReference type="UniProtKB" id="Q6ZT98"/>
    </source>
</evidence>
<evidence type="ECO:0000250" key="3">
    <source>
        <dbReference type="UniProtKB" id="Q8NHH1"/>
    </source>
</evidence>
<evidence type="ECO:0000255" key="4"/>
<evidence type="ECO:0000255" key="5">
    <source>
        <dbReference type="PROSITE-ProRule" id="PRU00568"/>
    </source>
</evidence>
<evidence type="ECO:0000256" key="6">
    <source>
        <dbReference type="SAM" id="MobiDB-lite"/>
    </source>
</evidence>
<evidence type="ECO:0000269" key="7">
    <source>
    </source>
</evidence>
<evidence type="ECO:0000269" key="8">
    <source>
    </source>
</evidence>
<evidence type="ECO:0000269" key="9">
    <source>
    </source>
</evidence>
<evidence type="ECO:0000269" key="10">
    <source>
    </source>
</evidence>
<evidence type="ECO:0000269" key="11">
    <source>
    </source>
</evidence>
<evidence type="ECO:0000303" key="12">
    <source>
    </source>
</evidence>
<evidence type="ECO:0000303" key="13">
    <source>
    </source>
</evidence>
<evidence type="ECO:0000303" key="14">
    <source>
    </source>
</evidence>
<evidence type="ECO:0000305" key="15"/>
<evidence type="ECO:0000305" key="16">
    <source>
    </source>
</evidence>
<evidence type="ECO:0000305" key="17">
    <source>
    </source>
</evidence>
<evidence type="ECO:0000312" key="18">
    <source>
        <dbReference type="EMBL" id="BAB30318.1"/>
    </source>
</evidence>
<evidence type="ECO:0000312" key="19">
    <source>
        <dbReference type="EMBL" id="CAM84332.1"/>
    </source>
</evidence>
<evidence type="ECO:0000312" key="20">
    <source>
        <dbReference type="MGI" id="MGI:1921660"/>
    </source>
</evidence>
<feature type="chain" id="PRO_0000326165" description="Tubulin polyglutamylase TTLL11">
    <location>
        <begin position="1"/>
        <end position="727"/>
    </location>
</feature>
<feature type="domain" description="TTL" evidence="5">
    <location>
        <begin position="125"/>
        <end position="477"/>
    </location>
</feature>
<feature type="region of interest" description="Disordered" evidence="6">
    <location>
        <begin position="1"/>
        <end position="88"/>
    </location>
</feature>
<feature type="region of interest" description="c-MTBD region" evidence="3">
    <location>
        <begin position="464"/>
        <end position="566"/>
    </location>
</feature>
<feature type="region of interest" description="Disordered" evidence="6">
    <location>
        <begin position="530"/>
        <end position="551"/>
    </location>
</feature>
<feature type="region of interest" description="Disordered" evidence="6">
    <location>
        <begin position="694"/>
        <end position="727"/>
    </location>
</feature>
<feature type="compositionally biased region" description="Basic and acidic residues" evidence="6">
    <location>
        <begin position="1"/>
        <end position="12"/>
    </location>
</feature>
<feature type="compositionally biased region" description="Low complexity" evidence="6">
    <location>
        <begin position="17"/>
        <end position="34"/>
    </location>
</feature>
<feature type="compositionally biased region" description="Basic and acidic residues" evidence="6">
    <location>
        <begin position="49"/>
        <end position="63"/>
    </location>
</feature>
<feature type="compositionally biased region" description="Basic and acidic residues" evidence="6">
    <location>
        <begin position="72"/>
        <end position="81"/>
    </location>
</feature>
<feature type="binding site" evidence="1">
    <location>
        <position position="246"/>
    </location>
    <ligand>
        <name>ATP</name>
        <dbReference type="ChEBI" id="CHEBI:30616"/>
    </ligand>
</feature>
<feature type="binding site" evidence="1">
    <location>
        <begin position="252"/>
        <end position="253"/>
    </location>
    <ligand>
        <name>ATP</name>
        <dbReference type="ChEBI" id="CHEBI:30616"/>
    </ligand>
</feature>
<feature type="binding site" evidence="1">
    <location>
        <position position="252"/>
    </location>
    <ligand>
        <name>a protein</name>
        <dbReference type="ChEBI" id="CHEBI:16541"/>
    </ligand>
    <ligandPart>
        <name>L-glutamate residue</name>
        <dbReference type="ChEBI" id="CHEBI:29973"/>
        <note>L-glutamate acceptor residue in protein target</note>
    </ligandPart>
</feature>
<feature type="binding site" evidence="1">
    <location>
        <begin position="279"/>
        <end position="282"/>
    </location>
    <ligand>
        <name>ATP</name>
        <dbReference type="ChEBI" id="CHEBI:30616"/>
    </ligand>
</feature>
<feature type="binding site" evidence="1">
    <location>
        <begin position="292"/>
        <end position="294"/>
    </location>
    <ligand>
        <name>ATP</name>
        <dbReference type="ChEBI" id="CHEBI:30616"/>
    </ligand>
</feature>
<feature type="binding site" evidence="1">
    <location>
        <position position="318"/>
    </location>
    <ligand>
        <name>L-glutamate</name>
        <dbReference type="ChEBI" id="CHEBI:29985"/>
    </ligand>
</feature>
<feature type="binding site" evidence="1">
    <location>
        <begin position="340"/>
        <end position="341"/>
    </location>
    <ligand>
        <name>ATP</name>
        <dbReference type="ChEBI" id="CHEBI:30616"/>
    </ligand>
</feature>
<feature type="binding site" evidence="1">
    <location>
        <position position="342"/>
    </location>
    <ligand>
        <name>L-glutamate</name>
        <dbReference type="ChEBI" id="CHEBI:29985"/>
    </ligand>
</feature>
<feature type="binding site" evidence="1">
    <location>
        <position position="343"/>
    </location>
    <ligand>
        <name>L-glutamate</name>
        <dbReference type="ChEBI" id="CHEBI:29985"/>
    </ligand>
</feature>
<feature type="binding site" evidence="1">
    <location>
        <position position="362"/>
    </location>
    <ligand>
        <name>L-glutamate</name>
        <dbReference type="ChEBI" id="CHEBI:29985"/>
    </ligand>
</feature>
<feature type="binding site" evidence="1">
    <location>
        <position position="425"/>
    </location>
    <ligand>
        <name>Mg(2+)</name>
        <dbReference type="ChEBI" id="CHEBI:18420"/>
        <label>1</label>
    </ligand>
</feature>
<feature type="binding site" evidence="1">
    <location>
        <position position="438"/>
    </location>
    <ligand>
        <name>Mg(2+)</name>
        <dbReference type="ChEBI" id="CHEBI:18420"/>
        <label>1</label>
    </ligand>
</feature>
<feature type="binding site" evidence="1">
    <location>
        <position position="438"/>
    </location>
    <ligand>
        <name>Mg(2+)</name>
        <dbReference type="ChEBI" id="CHEBI:18420"/>
        <label>2</label>
    </ligand>
</feature>
<feature type="binding site" evidence="1">
    <location>
        <position position="440"/>
    </location>
    <ligand>
        <name>Mg(2+)</name>
        <dbReference type="ChEBI" id="CHEBI:18420"/>
        <label>2</label>
    </ligand>
</feature>
<feature type="binding site" evidence="1">
    <location>
        <position position="470"/>
    </location>
    <ligand>
        <name>L-glutamate</name>
        <dbReference type="ChEBI" id="CHEBI:29985"/>
    </ligand>
</feature>
<feature type="site" description="Essential for specifying alpha-elongation versus initiation step of the polyglutamylase activity" evidence="1">
    <location>
        <position position="252"/>
    </location>
</feature>
<feature type="splice variant" id="VSP_052718" description="In isoform 3." evidence="13">
    <location>
        <begin position="210"/>
        <end position="281"/>
    </location>
</feature>
<feature type="splice variant" id="VSP_052719" description="In isoform 2 and isoform 3." evidence="12 13">
    <original>HFPDIYMDRKHRIPPVSDRMSSWKHKGSSLSIVR</original>
    <variation>Q</variation>
    <location>
        <begin position="491"/>
        <end position="524"/>
    </location>
</feature>
<feature type="sequence conflict" description="In Ref. 2; BAB30318." evidence="15" ref="2">
    <original>R</original>
    <variation>G</variation>
    <location>
        <position position="110"/>
    </location>
</feature>
<feature type="sequence conflict" description="In Ref. 2; BAB30318." evidence="15" ref="2">
    <original>S</original>
    <variation>G</variation>
    <location>
        <position position="113"/>
    </location>
</feature>
<feature type="sequence conflict" description="In Ref. 2; BAB30318." evidence="15" ref="2">
    <original>S</original>
    <variation>D</variation>
    <location>
        <position position="119"/>
    </location>
</feature>
<keyword id="KW-0025">Alternative splicing</keyword>
<keyword id="KW-0067">ATP-binding</keyword>
<keyword id="KW-0966">Cell projection</keyword>
<keyword id="KW-0969">Cilium</keyword>
<keyword id="KW-0963">Cytoplasm</keyword>
<keyword id="KW-0206">Cytoskeleton</keyword>
<keyword id="KW-0436">Ligase</keyword>
<keyword id="KW-0460">Magnesium</keyword>
<keyword id="KW-0479">Metal-binding</keyword>
<keyword id="KW-0493">Microtubule</keyword>
<keyword id="KW-0547">Nucleotide-binding</keyword>
<keyword id="KW-1185">Reference proteome</keyword>
<dbReference type="EC" id="6.3.2.-" evidence="9 10"/>
<dbReference type="EMBL" id="AM690755">
    <property type="protein sequence ID" value="CAM84332.1"/>
    <property type="molecule type" value="mRNA"/>
</dbReference>
<dbReference type="EMBL" id="AK016577">
    <property type="protein sequence ID" value="BAB30318.1"/>
    <property type="status" value="ALT_SEQ"/>
    <property type="molecule type" value="mRNA"/>
</dbReference>
<dbReference type="EMBL" id="BC115858">
    <property type="protein sequence ID" value="AAI15859.1"/>
    <property type="molecule type" value="mRNA"/>
</dbReference>
<dbReference type="CCDS" id="CCDS50579.1">
    <molecule id="A4Q9F4-1"/>
</dbReference>
<dbReference type="RefSeq" id="NP_084050.1">
    <molecule id="A4Q9F4-1"/>
    <property type="nucleotide sequence ID" value="NM_029774.3"/>
</dbReference>
<dbReference type="RefSeq" id="XP_036018534.1">
    <molecule id="A4Q9F4-2"/>
    <property type="nucleotide sequence ID" value="XM_036162641.1"/>
</dbReference>
<dbReference type="SMR" id="A4Q9F4"/>
<dbReference type="BioGRID" id="216728">
    <property type="interactions" value="1"/>
</dbReference>
<dbReference type="FunCoup" id="A4Q9F4">
    <property type="interactions" value="135"/>
</dbReference>
<dbReference type="STRING" id="10090.ENSMUSP00000028248"/>
<dbReference type="PhosphoSitePlus" id="A4Q9F4"/>
<dbReference type="jPOST" id="A4Q9F4"/>
<dbReference type="PaxDb" id="10090-ENSMUSP00000028248"/>
<dbReference type="ProteomicsDB" id="300049">
    <molecule id="A4Q9F4-1"/>
</dbReference>
<dbReference type="ProteomicsDB" id="300050">
    <molecule id="A4Q9F4-2"/>
</dbReference>
<dbReference type="ProteomicsDB" id="300051">
    <molecule id="A4Q9F4-3"/>
</dbReference>
<dbReference type="Antibodypedia" id="53016">
    <property type="antibodies" value="16 antibodies from 8 providers"/>
</dbReference>
<dbReference type="Ensembl" id="ENSMUST00000028248.11">
    <molecule id="A4Q9F4-1"/>
    <property type="protein sequence ID" value="ENSMUSP00000028248.5"/>
    <property type="gene ID" value="ENSMUSG00000026885.14"/>
</dbReference>
<dbReference type="Ensembl" id="ENSMUST00000112976.9">
    <molecule id="A4Q9F4-2"/>
    <property type="protein sequence ID" value="ENSMUSP00000108600.3"/>
    <property type="gene ID" value="ENSMUSG00000026885.14"/>
</dbReference>
<dbReference type="GeneID" id="74410"/>
<dbReference type="KEGG" id="mmu:74410"/>
<dbReference type="UCSC" id="uc008jkz.3">
    <molecule id="A4Q9F4-1"/>
    <property type="organism name" value="mouse"/>
</dbReference>
<dbReference type="AGR" id="MGI:1921660"/>
<dbReference type="CTD" id="158135"/>
<dbReference type="MGI" id="MGI:1921660">
    <property type="gene designation" value="Ttll11"/>
</dbReference>
<dbReference type="VEuPathDB" id="HostDB:ENSMUSG00000026885"/>
<dbReference type="eggNOG" id="KOG2158">
    <property type="taxonomic scope" value="Eukaryota"/>
</dbReference>
<dbReference type="GeneTree" id="ENSGT00940000156689"/>
<dbReference type="HOGENOM" id="CLU_010131_6_0_1"/>
<dbReference type="InParanoid" id="A4Q9F4"/>
<dbReference type="OMA" id="CDIYWHS"/>
<dbReference type="OrthoDB" id="202825at2759"/>
<dbReference type="PhylomeDB" id="A4Q9F4"/>
<dbReference type="TreeFam" id="TF313087"/>
<dbReference type="BRENDA" id="6.3.2.B3">
    <property type="organism ID" value="3474"/>
</dbReference>
<dbReference type="Reactome" id="R-MMU-8955332">
    <property type="pathway name" value="Carboxyterminal post-translational modifications of tubulin"/>
</dbReference>
<dbReference type="BioGRID-ORCS" id="74410">
    <property type="hits" value="3 hits in 75 CRISPR screens"/>
</dbReference>
<dbReference type="ChiTaRS" id="Ttll11">
    <property type="organism name" value="mouse"/>
</dbReference>
<dbReference type="PRO" id="PR:A4Q9F4"/>
<dbReference type="Proteomes" id="UP000000589">
    <property type="component" value="Chromosome 2"/>
</dbReference>
<dbReference type="RNAct" id="A4Q9F4">
    <property type="molecule type" value="protein"/>
</dbReference>
<dbReference type="Bgee" id="ENSMUSG00000026885">
    <property type="expression patterns" value="Expressed in gastrula and 119 other cell types or tissues"/>
</dbReference>
<dbReference type="ExpressionAtlas" id="A4Q9F4">
    <property type="expression patterns" value="baseline and differential"/>
</dbReference>
<dbReference type="GO" id="GO:0036064">
    <property type="term" value="C:ciliary basal body"/>
    <property type="evidence" value="ECO:0000314"/>
    <property type="project" value="MGI"/>
</dbReference>
<dbReference type="GO" id="GO:0005737">
    <property type="term" value="C:cytoplasm"/>
    <property type="evidence" value="ECO:0007669"/>
    <property type="project" value="UniProtKB-KW"/>
</dbReference>
<dbReference type="GO" id="GO:0005874">
    <property type="term" value="C:microtubule"/>
    <property type="evidence" value="ECO:0007669"/>
    <property type="project" value="UniProtKB-KW"/>
</dbReference>
<dbReference type="GO" id="GO:0005524">
    <property type="term" value="F:ATP binding"/>
    <property type="evidence" value="ECO:0007669"/>
    <property type="project" value="UniProtKB-KW"/>
</dbReference>
<dbReference type="GO" id="GO:0046872">
    <property type="term" value="F:metal ion binding"/>
    <property type="evidence" value="ECO:0007669"/>
    <property type="project" value="UniProtKB-KW"/>
</dbReference>
<dbReference type="GO" id="GO:0106438">
    <property type="term" value="F:protein-glutamic acid ligase activity, elongating"/>
    <property type="evidence" value="ECO:0007669"/>
    <property type="project" value="RHEA"/>
</dbReference>
<dbReference type="GO" id="GO:0106437">
    <property type="term" value="F:protein-glutamic acid ligase activity, initiating"/>
    <property type="evidence" value="ECO:0007669"/>
    <property type="project" value="RHEA"/>
</dbReference>
<dbReference type="GO" id="GO:0070740">
    <property type="term" value="F:tubulin-glutamic acid ligase activity"/>
    <property type="evidence" value="ECO:0000314"/>
    <property type="project" value="UniProtKB"/>
</dbReference>
<dbReference type="GO" id="GO:0051013">
    <property type="term" value="P:microtubule severing"/>
    <property type="evidence" value="ECO:0000314"/>
    <property type="project" value="MGI"/>
</dbReference>
<dbReference type="GO" id="GO:0036211">
    <property type="term" value="P:protein modification process"/>
    <property type="evidence" value="ECO:0007669"/>
    <property type="project" value="InterPro"/>
</dbReference>
<dbReference type="FunFam" id="3.30.470.20:FF:000044">
    <property type="entry name" value="tubulin polyglutamylase TTLL11 isoform X2"/>
    <property type="match status" value="1"/>
</dbReference>
<dbReference type="Gene3D" id="3.30.470.20">
    <property type="entry name" value="ATP-grasp fold, B domain"/>
    <property type="match status" value="1"/>
</dbReference>
<dbReference type="InterPro" id="IPR004344">
    <property type="entry name" value="TTL/TTLL_fam"/>
</dbReference>
<dbReference type="PANTHER" id="PTHR12241">
    <property type="entry name" value="TUBULIN POLYGLUTAMYLASE"/>
    <property type="match status" value="1"/>
</dbReference>
<dbReference type="PANTHER" id="PTHR12241:SF154">
    <property type="entry name" value="TUBULIN POLYGLUTAMYLASE TTLL11"/>
    <property type="match status" value="1"/>
</dbReference>
<dbReference type="Pfam" id="PF03133">
    <property type="entry name" value="TTL"/>
    <property type="match status" value="1"/>
</dbReference>
<dbReference type="SUPFAM" id="SSF56059">
    <property type="entry name" value="Glutathione synthetase ATP-binding domain-like"/>
    <property type="match status" value="1"/>
</dbReference>
<dbReference type="PROSITE" id="PS51221">
    <property type="entry name" value="TTL"/>
    <property type="match status" value="1"/>
</dbReference>
<gene>
    <name evidence="19 20" type="primary">Ttll11</name>
</gene>
<protein>
    <recommendedName>
        <fullName evidence="14">Tubulin polyglutamylase TTLL11</fullName>
        <ecNumber evidence="9 10">6.3.2.-</ecNumber>
    </recommendedName>
    <alternativeName>
        <fullName>Tubulin--tyrosine ligase-like protein 11</fullName>
    </alternativeName>
</protein>
<name>TTL11_MOUSE</name>
<reference key="1">
    <citation type="journal article" date="2007" name="Mol. Cell">
        <title>A targeted multienzyme mechanism for selective microtubule polyglutamylation.</title>
        <authorList>
            <person name="van Dijk J."/>
            <person name="Rogowski K."/>
            <person name="Miro J."/>
            <person name="Lacroix B."/>
            <person name="Edde B."/>
            <person name="Janke C."/>
        </authorList>
    </citation>
    <scope>NUCLEOTIDE SEQUENCE [MRNA] (ISOFORM 1)</scope>
    <scope>FUNCTION</scope>
    <scope>CATALYTIC ACTIVITY</scope>
    <scope>SUBCELLULAR LOCATION</scope>
    <scope>TISSUE SPECIFICITY</scope>
    <source>
        <strain evidence="19">C57BL/6J</strain>
        <tissue evidence="19">Testis</tissue>
    </source>
</reference>
<reference key="2">
    <citation type="journal article" date="2005" name="Science">
        <title>The transcriptional landscape of the mammalian genome.</title>
        <authorList>
            <person name="Carninci P."/>
            <person name="Kasukawa T."/>
            <person name="Katayama S."/>
            <person name="Gough J."/>
            <person name="Frith M.C."/>
            <person name="Maeda N."/>
            <person name="Oyama R."/>
            <person name="Ravasi T."/>
            <person name="Lenhard B."/>
            <person name="Wells C."/>
            <person name="Kodzius R."/>
            <person name="Shimokawa K."/>
            <person name="Bajic V.B."/>
            <person name="Brenner S.E."/>
            <person name="Batalov S."/>
            <person name="Forrest A.R."/>
            <person name="Zavolan M."/>
            <person name="Davis M.J."/>
            <person name="Wilming L.G."/>
            <person name="Aidinis V."/>
            <person name="Allen J.E."/>
            <person name="Ambesi-Impiombato A."/>
            <person name="Apweiler R."/>
            <person name="Aturaliya R.N."/>
            <person name="Bailey T.L."/>
            <person name="Bansal M."/>
            <person name="Baxter L."/>
            <person name="Beisel K.W."/>
            <person name="Bersano T."/>
            <person name="Bono H."/>
            <person name="Chalk A.M."/>
            <person name="Chiu K.P."/>
            <person name="Choudhary V."/>
            <person name="Christoffels A."/>
            <person name="Clutterbuck D.R."/>
            <person name="Crowe M.L."/>
            <person name="Dalla E."/>
            <person name="Dalrymple B.P."/>
            <person name="de Bono B."/>
            <person name="Della Gatta G."/>
            <person name="di Bernardo D."/>
            <person name="Down T."/>
            <person name="Engstrom P."/>
            <person name="Fagiolini M."/>
            <person name="Faulkner G."/>
            <person name="Fletcher C.F."/>
            <person name="Fukushima T."/>
            <person name="Furuno M."/>
            <person name="Futaki S."/>
            <person name="Gariboldi M."/>
            <person name="Georgii-Hemming P."/>
            <person name="Gingeras T.R."/>
            <person name="Gojobori T."/>
            <person name="Green R.E."/>
            <person name="Gustincich S."/>
            <person name="Harbers M."/>
            <person name="Hayashi Y."/>
            <person name="Hensch T.K."/>
            <person name="Hirokawa N."/>
            <person name="Hill D."/>
            <person name="Huminiecki L."/>
            <person name="Iacono M."/>
            <person name="Ikeo K."/>
            <person name="Iwama A."/>
            <person name="Ishikawa T."/>
            <person name="Jakt M."/>
            <person name="Kanapin A."/>
            <person name="Katoh M."/>
            <person name="Kawasawa Y."/>
            <person name="Kelso J."/>
            <person name="Kitamura H."/>
            <person name="Kitano H."/>
            <person name="Kollias G."/>
            <person name="Krishnan S.P."/>
            <person name="Kruger A."/>
            <person name="Kummerfeld S.K."/>
            <person name="Kurochkin I.V."/>
            <person name="Lareau L.F."/>
            <person name="Lazarevic D."/>
            <person name="Lipovich L."/>
            <person name="Liu J."/>
            <person name="Liuni S."/>
            <person name="McWilliam S."/>
            <person name="Madan Babu M."/>
            <person name="Madera M."/>
            <person name="Marchionni L."/>
            <person name="Matsuda H."/>
            <person name="Matsuzawa S."/>
            <person name="Miki H."/>
            <person name="Mignone F."/>
            <person name="Miyake S."/>
            <person name="Morris K."/>
            <person name="Mottagui-Tabar S."/>
            <person name="Mulder N."/>
            <person name="Nakano N."/>
            <person name="Nakauchi H."/>
            <person name="Ng P."/>
            <person name="Nilsson R."/>
            <person name="Nishiguchi S."/>
            <person name="Nishikawa S."/>
            <person name="Nori F."/>
            <person name="Ohara O."/>
            <person name="Okazaki Y."/>
            <person name="Orlando V."/>
            <person name="Pang K.C."/>
            <person name="Pavan W.J."/>
            <person name="Pavesi G."/>
            <person name="Pesole G."/>
            <person name="Petrovsky N."/>
            <person name="Piazza S."/>
            <person name="Reed J."/>
            <person name="Reid J.F."/>
            <person name="Ring B.Z."/>
            <person name="Ringwald M."/>
            <person name="Rost B."/>
            <person name="Ruan Y."/>
            <person name="Salzberg S.L."/>
            <person name="Sandelin A."/>
            <person name="Schneider C."/>
            <person name="Schoenbach C."/>
            <person name="Sekiguchi K."/>
            <person name="Semple C.A."/>
            <person name="Seno S."/>
            <person name="Sessa L."/>
            <person name="Sheng Y."/>
            <person name="Shibata Y."/>
            <person name="Shimada H."/>
            <person name="Shimada K."/>
            <person name="Silva D."/>
            <person name="Sinclair B."/>
            <person name="Sperling S."/>
            <person name="Stupka E."/>
            <person name="Sugiura K."/>
            <person name="Sultana R."/>
            <person name="Takenaka Y."/>
            <person name="Taki K."/>
            <person name="Tammoja K."/>
            <person name="Tan S.L."/>
            <person name="Tang S."/>
            <person name="Taylor M.S."/>
            <person name="Tegner J."/>
            <person name="Teichmann S.A."/>
            <person name="Ueda H.R."/>
            <person name="van Nimwegen E."/>
            <person name="Verardo R."/>
            <person name="Wei C.L."/>
            <person name="Yagi K."/>
            <person name="Yamanishi H."/>
            <person name="Zabarovsky E."/>
            <person name="Zhu S."/>
            <person name="Zimmer A."/>
            <person name="Hide W."/>
            <person name="Bult C."/>
            <person name="Grimmond S.M."/>
            <person name="Teasdale R.D."/>
            <person name="Liu E.T."/>
            <person name="Brusic V."/>
            <person name="Quackenbush J."/>
            <person name="Wahlestedt C."/>
            <person name="Mattick J.S."/>
            <person name="Hume D.A."/>
            <person name="Kai C."/>
            <person name="Sasaki D."/>
            <person name="Tomaru Y."/>
            <person name="Fukuda S."/>
            <person name="Kanamori-Katayama M."/>
            <person name="Suzuki M."/>
            <person name="Aoki J."/>
            <person name="Arakawa T."/>
            <person name="Iida J."/>
            <person name="Imamura K."/>
            <person name="Itoh M."/>
            <person name="Kato T."/>
            <person name="Kawaji H."/>
            <person name="Kawagashira N."/>
            <person name="Kawashima T."/>
            <person name="Kojima M."/>
            <person name="Kondo S."/>
            <person name="Konno H."/>
            <person name="Nakano K."/>
            <person name="Ninomiya N."/>
            <person name="Nishio T."/>
            <person name="Okada M."/>
            <person name="Plessy C."/>
            <person name="Shibata K."/>
            <person name="Shiraki T."/>
            <person name="Suzuki S."/>
            <person name="Tagami M."/>
            <person name="Waki K."/>
            <person name="Watahiki A."/>
            <person name="Okamura-Oho Y."/>
            <person name="Suzuki H."/>
            <person name="Kawai J."/>
            <person name="Hayashizaki Y."/>
        </authorList>
    </citation>
    <scope>NUCLEOTIDE SEQUENCE [LARGE SCALE MRNA] OF 110-727 (ISOFORM 3)</scope>
    <source>
        <strain evidence="18">C57BL/6J</strain>
        <tissue evidence="18">Testis</tissue>
    </source>
</reference>
<reference key="3">
    <citation type="journal article" date="2004" name="Genome Res.">
        <title>The status, quality, and expansion of the NIH full-length cDNA project: the Mammalian Gene Collection (MGC).</title>
        <authorList>
            <consortium name="The MGC Project Team"/>
        </authorList>
    </citation>
    <scope>NUCLEOTIDE SEQUENCE [LARGE SCALE MRNA] OF 185-727 (ISOFORM 2)</scope>
</reference>
<reference key="4">
    <citation type="journal article" date="2010" name="J. Cell Biol.">
        <title>Tubulin polyglutamylation stimulates spastin-mediated microtubule severing.</title>
        <authorList>
            <person name="Lacroix B."/>
            <person name="van Dijk J."/>
            <person name="Gold N.D."/>
            <person name="Guizetti J."/>
            <person name="Aldrian-Herrada G."/>
            <person name="Rogowski K."/>
            <person name="Gerlich D.W."/>
            <person name="Janke C."/>
        </authorList>
    </citation>
    <scope>FUNCTION</scope>
    <scope>CATALYTIC ACTIVITY</scope>
</reference>
<reference key="5">
    <citation type="journal article" date="2013" name="J. Cell Biol.">
        <title>Tubulin glycylases and glutamylases have distinct functions in stabilization and motility of ependymal cilia.</title>
        <authorList>
            <person name="Bosch Grau M."/>
            <person name="Gonzalez Curto G."/>
            <person name="Rocha C."/>
            <person name="Magiera M.M."/>
            <person name="Marques Sousa P."/>
            <person name="Giordano T."/>
            <person name="Spassky N."/>
            <person name="Janke C."/>
        </authorList>
    </citation>
    <scope>TISSUE SPECIFICITY</scope>
</reference>
<sequence length="727" mass="82361">MRRSSPEKKPEAEWEADAAAAAAATAAATESLPAETEKQQGVDAGAAGDPERLELEEQPKDVGRIPTPTRRHAPEEGEARVVRRLPPALPLAQPRPAARALSQLVKARGRSRSRVYRRSAGSMRPVTVDSSKARTSLDALKISLRQLRWKEFPFGRRLPCDIYWHGVSFRDSDILSGQVNKFPGMTEMVRKVTLSRALRIMQNLFPEEYNFYPRSWILPEEFQLFVSQVQTVKEGDPSWKPTFIVKPDSGCQGDGIYLIKDPCDGRLTGTLHNRPAVVQEYIRKPLLIDKLKFDIRLYVLLKSLDPLEIYIAKDGLSRFCTEPYQEPNPQNLHHVFMHLTNYSLNIHSGKFVHSDSASTGSKRTFSSILCRLSSKGVDIKKVWSDIISLVIKTVIALTPELKVFYQSDIPTGRPGPTCFQILGFDILLMKNLKPMLLEVNANPSMRIEHEYELSPGVFENIPSLVDEEVKVAVIRDTLRLMDPLKKKKEIHFPDIYMDRKHRIPPVSDRMSSWKHKGSSLSIVRSQQMEKSFTSKEDLNCDPTGGDSEPNPEAHLPSICLKQVFPKYAKQFNYLRLVDRMANLFIRFLGIKGTMKLGPTGFRTFIRNCKLSSSSLSMAAVDILYIDITRRWNSVTVDQRDSGMCLQAFVEAFFFLAQRKFKLQPLHEQVASLIDLCEYHLSVLDEKRLLCHRGRPLQRNPPQMNRPEHSATGSSAPRVIGASKLSQS</sequence>
<comment type="function">
    <text evidence="3 9 10">Polyglutamylase which modifies tubulin, generating polyglutamate side chains of variable lengths on the gamma-carboxyl group of specific glutamate residues within the C-terminal tail of tubulin (PubMed:17499049, PubMed:20530212). Preferentially mediates ATP-dependent polyglutamate long side-chain elongation over the initiation step of the polyglutamylation reaction (PubMed:17499049, PubMed:20530212). Preferentially modifies the alpha-tubulin tail over a beta-tail (PubMed:17499049). Required for CCSAP localization to both spindle and cilia microtubules (By similarity). Promotes tubulin polyglutamylation which stimulates spastin/SPAST-mediated microtubule severing, thereby regulating microtubule functions (PubMed:20530212).</text>
</comment>
<comment type="catalytic activity">
    <reaction evidence="9">
        <text>L-glutamyl-[protein] + L-glutamate + ATP = gamma-L-glutamyl-L-glutamyl-[protein] + ADP + phosphate + H(+)</text>
        <dbReference type="Rhea" id="RHEA:60144"/>
        <dbReference type="Rhea" id="RHEA-COMP:10208"/>
        <dbReference type="Rhea" id="RHEA-COMP:15517"/>
        <dbReference type="ChEBI" id="CHEBI:15378"/>
        <dbReference type="ChEBI" id="CHEBI:29973"/>
        <dbReference type="ChEBI" id="CHEBI:29985"/>
        <dbReference type="ChEBI" id="CHEBI:30616"/>
        <dbReference type="ChEBI" id="CHEBI:43474"/>
        <dbReference type="ChEBI" id="CHEBI:143622"/>
        <dbReference type="ChEBI" id="CHEBI:456216"/>
    </reaction>
    <physiologicalReaction direction="left-to-right" evidence="16">
        <dbReference type="Rhea" id="RHEA:60145"/>
    </physiologicalReaction>
</comment>
<comment type="catalytic activity">
    <reaction evidence="9 10">
        <text>(L-glutamyl)(n)-gamma-L-glutamyl-L-glutamyl-[protein] + L-glutamate + ATP = (L-glutamyl)(n+1)-gamma-L-glutamyl-L-glutamyl-[protein] + ADP + phosphate + H(+)</text>
        <dbReference type="Rhea" id="RHEA:60148"/>
        <dbReference type="Rhea" id="RHEA-COMP:15519"/>
        <dbReference type="Rhea" id="RHEA-COMP:15675"/>
        <dbReference type="ChEBI" id="CHEBI:15378"/>
        <dbReference type="ChEBI" id="CHEBI:29985"/>
        <dbReference type="ChEBI" id="CHEBI:30616"/>
        <dbReference type="ChEBI" id="CHEBI:43474"/>
        <dbReference type="ChEBI" id="CHEBI:143623"/>
        <dbReference type="ChEBI" id="CHEBI:456216"/>
    </reaction>
    <physiologicalReaction direction="left-to-right" evidence="16 17">
        <dbReference type="Rhea" id="RHEA:60149"/>
    </physiologicalReaction>
</comment>
<comment type="cofactor">
    <cofactor evidence="1">
        <name>Mg(2+)</name>
        <dbReference type="ChEBI" id="CHEBI:18420"/>
    </cofactor>
</comment>
<comment type="subcellular location">
    <subcellularLocation>
        <location evidence="9">Cytoplasm</location>
        <location evidence="9">Cytoskeleton</location>
        <location evidence="9">Cilium basal body</location>
    </subcellularLocation>
    <subcellularLocation>
        <location evidence="17">Cytoplasm</location>
        <location evidence="17">Cytoskeleton</location>
    </subcellularLocation>
</comment>
<comment type="alternative products">
    <event type="alternative splicing"/>
    <isoform>
        <id>A4Q9F4-1</id>
        <name evidence="9">1</name>
        <sequence type="displayed"/>
    </isoform>
    <isoform>
        <id>A4Q9F4-2</id>
        <name evidence="7">2</name>
        <sequence type="described" ref="VSP_052719"/>
    </isoform>
    <isoform>
        <id>A4Q9F4-3</id>
        <name evidence="8">3</name>
        <sequence type="described" ref="VSP_052718 VSP_052719"/>
    </isoform>
</comment>
<comment type="tissue specificity">
    <text evidence="9 11">Highly expressed in brain, kidney, liver, lung, muscle and testis (PubMed:17499049). Expressed in heart, spleen and trachea (PubMed:17499049). In the brain, expressed in ependymal cilia, cortex, corpus callosum and striatum (PubMed:23897886).</text>
</comment>
<comment type="domain">
    <text evidence="2 3">The flexible c-MTBD (cationic microtubule binding domain) region mediates binding to microtubules. It is positively charged and becomes ordered when bound to microtubules: it interacts with a negatively charged patch on tubulin. The presence of positive charges in the c-MTBD region is essential for proper binding.</text>
</comment>
<comment type="domain">
    <text evidence="1">Gln-252 is the main determinant for regioselectivity, which segregates between initiases and elongases in all tubulin--tyrosine ligase family. A glutamine residue at this position is found in elongases TTLL6, TTLL9, TTLL11, TTLL13, TTLL10 and favors glutamate-chain elongation, whereas an arginine residue is found in initiases TTLL2, TTLL4, TTLL5, TTLL3, TTLL8 and favors initiation.</text>
</comment>
<comment type="similarity">
    <text evidence="4">Belongs to the tubulin--tyrosine ligase family.</text>
</comment>
<comment type="sequence caution" evidence="15">
    <conflict type="erroneous initiation">
        <sequence resource="EMBL-CDS" id="BAB30318"/>
    </conflict>
    <text>Truncated N-terminus.</text>
</comment>
<comment type="sequence caution" evidence="15">
    <conflict type="erroneous termination">
        <sequence resource="EMBL-CDS" id="BAB30318"/>
    </conflict>
    <text>Truncated C-terminus.</text>
</comment>
<comment type="sequence caution" evidence="15">
    <conflict type="frameshift">
        <sequence resource="EMBL-CDS" id="BAB30318"/>
    </conflict>
</comment>
<accession>A4Q9F4</accession>
<accession>Q1LZJ9</accession>
<accession>Q9D4E7</accession>